<proteinExistence type="inferred from homology"/>
<name>NDPA_SALPB</name>
<protein>
    <recommendedName>
        <fullName evidence="1">Nucleoid-associated protein YejK</fullName>
    </recommendedName>
</protein>
<comment type="subcellular location">
    <subcellularLocation>
        <location evidence="1">Cytoplasm</location>
        <location evidence="1">Nucleoid</location>
    </subcellularLocation>
</comment>
<comment type="similarity">
    <text evidence="1">Belongs to the YejK family.</text>
</comment>
<feature type="chain" id="PRO_1000083331" description="Nucleoid-associated protein YejK">
    <location>
        <begin position="1"/>
        <end position="335"/>
    </location>
</feature>
<accession>A9N6F3</accession>
<gene>
    <name evidence="1" type="primary">yejK</name>
    <name type="ordered locus">SPAB_00773</name>
</gene>
<organism>
    <name type="scientific">Salmonella paratyphi B (strain ATCC BAA-1250 / SPB7)</name>
    <dbReference type="NCBI Taxonomy" id="1016998"/>
    <lineage>
        <taxon>Bacteria</taxon>
        <taxon>Pseudomonadati</taxon>
        <taxon>Pseudomonadota</taxon>
        <taxon>Gammaproteobacteria</taxon>
        <taxon>Enterobacterales</taxon>
        <taxon>Enterobacteriaceae</taxon>
        <taxon>Salmonella</taxon>
    </lineage>
</organism>
<evidence type="ECO:0000255" key="1">
    <source>
        <dbReference type="HAMAP-Rule" id="MF_00730"/>
    </source>
</evidence>
<reference key="1">
    <citation type="submission" date="2007-11" db="EMBL/GenBank/DDBJ databases">
        <authorList>
            <consortium name="The Salmonella enterica serovar Paratyphi B Genome Sequencing Project"/>
            <person name="McClelland M."/>
            <person name="Sanderson E.K."/>
            <person name="Porwollik S."/>
            <person name="Spieth J."/>
            <person name="Clifton W.S."/>
            <person name="Fulton R."/>
            <person name="Cordes M."/>
            <person name="Wollam A."/>
            <person name="Shah N."/>
            <person name="Pepin K."/>
            <person name="Bhonagiri V."/>
            <person name="Nash W."/>
            <person name="Johnson M."/>
            <person name="Thiruvilangam P."/>
            <person name="Wilson R."/>
        </authorList>
    </citation>
    <scope>NUCLEOTIDE SEQUENCE [LARGE SCALE GENOMIC DNA]</scope>
    <source>
        <strain>ATCC BAA-1250 / SPB7</strain>
    </source>
</reference>
<dbReference type="EMBL" id="CP000886">
    <property type="protein sequence ID" value="ABX66197.1"/>
    <property type="molecule type" value="Genomic_DNA"/>
</dbReference>
<dbReference type="RefSeq" id="WP_000050806.1">
    <property type="nucleotide sequence ID" value="NC_010102.1"/>
</dbReference>
<dbReference type="SMR" id="A9N6F3"/>
<dbReference type="KEGG" id="spq:SPAB_00773"/>
<dbReference type="PATRIC" id="fig|1016998.12.peg.725"/>
<dbReference type="HOGENOM" id="CLU_063050_0_1_6"/>
<dbReference type="BioCyc" id="SENT1016998:SPAB_RS03210-MONOMER"/>
<dbReference type="Proteomes" id="UP000008556">
    <property type="component" value="Chromosome"/>
</dbReference>
<dbReference type="GO" id="GO:0043590">
    <property type="term" value="C:bacterial nucleoid"/>
    <property type="evidence" value="ECO:0007669"/>
    <property type="project" value="TreeGrafter"/>
</dbReference>
<dbReference type="GO" id="GO:0005737">
    <property type="term" value="C:cytoplasm"/>
    <property type="evidence" value="ECO:0007669"/>
    <property type="project" value="UniProtKB-UniRule"/>
</dbReference>
<dbReference type="GO" id="GO:0003690">
    <property type="term" value="F:double-stranded DNA binding"/>
    <property type="evidence" value="ECO:0007669"/>
    <property type="project" value="TreeGrafter"/>
</dbReference>
<dbReference type="GO" id="GO:0003727">
    <property type="term" value="F:single-stranded RNA binding"/>
    <property type="evidence" value="ECO:0007669"/>
    <property type="project" value="TreeGrafter"/>
</dbReference>
<dbReference type="HAMAP" id="MF_00730">
    <property type="entry name" value="NdpA"/>
    <property type="match status" value="1"/>
</dbReference>
<dbReference type="InterPro" id="IPR007358">
    <property type="entry name" value="Nucleoid_associated_NdpA"/>
</dbReference>
<dbReference type="NCBIfam" id="NF001557">
    <property type="entry name" value="PRK00378.1"/>
    <property type="match status" value="1"/>
</dbReference>
<dbReference type="PANTHER" id="PTHR38772">
    <property type="match status" value="1"/>
</dbReference>
<dbReference type="PANTHER" id="PTHR38772:SF1">
    <property type="entry name" value="NUCLEOID-ASSOCIATED PROTEIN YEJK"/>
    <property type="match status" value="1"/>
</dbReference>
<dbReference type="Pfam" id="PF04245">
    <property type="entry name" value="NA37"/>
    <property type="match status" value="1"/>
</dbReference>
<sequence length="335" mass="37877">MSLDINQIALHQLIKRDEQNLELVLRDSLLEPTTTVVEMVAELHRVYSAKNKAYGLFNEESELAQALRLQRQGEEDFLAFSRAATGRLRDELAKYPFADGGIVLFCHYRYLAVEYLLVTVLNNLSSMRVNENLDINPTHYLDINHADIVARIDLTEWETNPQSTRYLTFLKGRVGRKVADFFMDFLGASEGLNAKAQNRGLLQAVDDFTAEAQLDKAERQNVRQQVYSYCNEQLQAGEEIELESLSKELSGVSEVSFSEFTAEKGYELEESFPADRSTLRQLTKYAGSGGGLTINFDAMLLGERIFWDPATDTLTIKGTPPNLRDQLQRRTSGGK</sequence>
<keyword id="KW-0963">Cytoplasm</keyword>